<keyword id="KW-0249">Electron transport</keyword>
<keyword id="KW-0349">Heme</keyword>
<keyword id="KW-0408">Iron</keyword>
<keyword id="KW-0472">Membrane</keyword>
<keyword id="KW-0479">Metal-binding</keyword>
<keyword id="KW-0496">Mitochondrion</keyword>
<keyword id="KW-0999">Mitochondrion inner membrane</keyword>
<keyword id="KW-0679">Respiratory chain</keyword>
<keyword id="KW-0812">Transmembrane</keyword>
<keyword id="KW-1133">Transmembrane helix</keyword>
<keyword id="KW-0813">Transport</keyword>
<keyword id="KW-0830">Ubiquinone</keyword>
<gene>
    <name type="primary">MT-CYB</name>
    <name type="synonym">COB</name>
    <name type="synonym">CYTB</name>
    <name type="synonym">MTCYB</name>
</gene>
<dbReference type="EMBL" id="AF163902">
    <property type="protein sequence ID" value="AAF24194.1"/>
    <property type="molecule type" value="Genomic_DNA"/>
</dbReference>
<dbReference type="SMR" id="Q9T7M0"/>
<dbReference type="GO" id="GO:0005743">
    <property type="term" value="C:mitochondrial inner membrane"/>
    <property type="evidence" value="ECO:0007669"/>
    <property type="project" value="UniProtKB-SubCell"/>
</dbReference>
<dbReference type="GO" id="GO:0045275">
    <property type="term" value="C:respiratory chain complex III"/>
    <property type="evidence" value="ECO:0007669"/>
    <property type="project" value="InterPro"/>
</dbReference>
<dbReference type="GO" id="GO:0046872">
    <property type="term" value="F:metal ion binding"/>
    <property type="evidence" value="ECO:0007669"/>
    <property type="project" value="UniProtKB-KW"/>
</dbReference>
<dbReference type="GO" id="GO:0008121">
    <property type="term" value="F:ubiquinol-cytochrome-c reductase activity"/>
    <property type="evidence" value="ECO:0007669"/>
    <property type="project" value="InterPro"/>
</dbReference>
<dbReference type="GO" id="GO:0006122">
    <property type="term" value="P:mitochondrial electron transport, ubiquinol to cytochrome c"/>
    <property type="evidence" value="ECO:0007669"/>
    <property type="project" value="TreeGrafter"/>
</dbReference>
<dbReference type="CDD" id="cd00290">
    <property type="entry name" value="cytochrome_b_C"/>
    <property type="match status" value="1"/>
</dbReference>
<dbReference type="CDD" id="cd00284">
    <property type="entry name" value="Cytochrome_b_N"/>
    <property type="match status" value="1"/>
</dbReference>
<dbReference type="FunFam" id="1.20.810.10:FF:000002">
    <property type="entry name" value="Cytochrome b"/>
    <property type="match status" value="1"/>
</dbReference>
<dbReference type="Gene3D" id="1.20.810.10">
    <property type="entry name" value="Cytochrome Bc1 Complex, Chain C"/>
    <property type="match status" value="1"/>
</dbReference>
<dbReference type="InterPro" id="IPR005798">
    <property type="entry name" value="Cyt_b/b6_C"/>
</dbReference>
<dbReference type="InterPro" id="IPR036150">
    <property type="entry name" value="Cyt_b/b6_C_sf"/>
</dbReference>
<dbReference type="InterPro" id="IPR005797">
    <property type="entry name" value="Cyt_b/b6_N"/>
</dbReference>
<dbReference type="InterPro" id="IPR027387">
    <property type="entry name" value="Cytb/b6-like_sf"/>
</dbReference>
<dbReference type="InterPro" id="IPR030689">
    <property type="entry name" value="Cytochrome_b"/>
</dbReference>
<dbReference type="InterPro" id="IPR048260">
    <property type="entry name" value="Cytochrome_b_C_euk/bac"/>
</dbReference>
<dbReference type="InterPro" id="IPR048259">
    <property type="entry name" value="Cytochrome_b_N_euk/bac"/>
</dbReference>
<dbReference type="InterPro" id="IPR016174">
    <property type="entry name" value="Di-haem_cyt_TM"/>
</dbReference>
<dbReference type="PANTHER" id="PTHR19271">
    <property type="entry name" value="CYTOCHROME B"/>
    <property type="match status" value="1"/>
</dbReference>
<dbReference type="PANTHER" id="PTHR19271:SF16">
    <property type="entry name" value="CYTOCHROME B"/>
    <property type="match status" value="1"/>
</dbReference>
<dbReference type="Pfam" id="PF00032">
    <property type="entry name" value="Cytochrom_B_C"/>
    <property type="match status" value="1"/>
</dbReference>
<dbReference type="Pfam" id="PF00033">
    <property type="entry name" value="Cytochrome_B"/>
    <property type="match status" value="1"/>
</dbReference>
<dbReference type="PIRSF" id="PIRSF038885">
    <property type="entry name" value="COB"/>
    <property type="match status" value="1"/>
</dbReference>
<dbReference type="SUPFAM" id="SSF81648">
    <property type="entry name" value="a domain/subunit of cytochrome bc1 complex (Ubiquinol-cytochrome c reductase)"/>
    <property type="match status" value="1"/>
</dbReference>
<dbReference type="SUPFAM" id="SSF81342">
    <property type="entry name" value="Transmembrane di-heme cytochromes"/>
    <property type="match status" value="1"/>
</dbReference>
<dbReference type="PROSITE" id="PS51003">
    <property type="entry name" value="CYTB_CTER"/>
    <property type="match status" value="1"/>
</dbReference>
<dbReference type="PROSITE" id="PS51002">
    <property type="entry name" value="CYTB_NTER"/>
    <property type="match status" value="1"/>
</dbReference>
<accession>Q9T7M0</accession>
<reference key="1">
    <citation type="journal article" date="2000" name="J. Mammal.">
        <title>Molecular systematics of a holarctic rodent (Microtus, Muridae).</title>
        <authorList>
            <person name="Conroy C.J."/>
            <person name="Cook J.A."/>
        </authorList>
    </citation>
    <scope>NUCLEOTIDE SEQUENCE [GENOMIC DNA]</scope>
    <source>
        <strain>Isolate HEH40</strain>
    </source>
</reference>
<sequence>MTIIRKKHPLIKMINHSFIDLPAPSNISSWWNFGSLLGLCLMIQIITGLFLAMHYTSDTTTAFSSVAHICRDVNYGWLIRYMHANGASMFFICLFLHVGRGVYYGSYNMIETWNMGIVLLFAVMATAFMGYVLPWGQMSFWGATVITNLLSAIPYIGTTLVEWIWGGFSVDKATLTRFFAFHFILPFIITALVLVHLLFLHETGSNNPTGLNSDTDKIPFHPYYTIKDFLGVLILLMVLMILALFFPDILGDPDNYTPANPLNTPPHIKPEWYFLFAYAILRSIPNKLGGVLALILSILILALMPLLHTSKQRALTFRPITQTMYWILVADLLVLTWIGGQPVEYPFIIIGQTASIAYFAIIVILMPIAGMIENNILNLD</sequence>
<geneLocation type="mitochondrion"/>
<organism>
    <name type="scientific">Alexandromys oeconomus</name>
    <name type="common">Tundra vole</name>
    <name type="synonym">Microtus oeconomus</name>
    <dbReference type="NCBI Taxonomy" id="2162900"/>
    <lineage>
        <taxon>Eukaryota</taxon>
        <taxon>Metazoa</taxon>
        <taxon>Chordata</taxon>
        <taxon>Craniata</taxon>
        <taxon>Vertebrata</taxon>
        <taxon>Euteleostomi</taxon>
        <taxon>Mammalia</taxon>
        <taxon>Eutheria</taxon>
        <taxon>Euarchontoglires</taxon>
        <taxon>Glires</taxon>
        <taxon>Rodentia</taxon>
        <taxon>Myomorpha</taxon>
        <taxon>Muroidea</taxon>
        <taxon>Cricetidae</taxon>
        <taxon>Arvicolinae</taxon>
        <taxon>Alexandromys</taxon>
    </lineage>
</organism>
<comment type="function">
    <text evidence="2">Component of the ubiquinol-cytochrome c reductase complex (complex III or cytochrome b-c1 complex) that is part of the mitochondrial respiratory chain. The b-c1 complex mediates electron transfer from ubiquinol to cytochrome c. Contributes to the generation of a proton gradient across the mitochondrial membrane that is then used for ATP synthesis.</text>
</comment>
<comment type="cofactor">
    <cofactor evidence="2">
        <name>heme b</name>
        <dbReference type="ChEBI" id="CHEBI:60344"/>
    </cofactor>
    <text evidence="2">Binds 2 heme b groups non-covalently.</text>
</comment>
<comment type="subunit">
    <text evidence="2">The cytochrome bc1 complex contains 11 subunits: 3 respiratory subunits (MT-CYB, CYC1 and UQCRFS1), 2 core proteins (UQCRC1 and UQCRC2) and 6 low-molecular weight proteins (UQCRH/QCR6, UQCRB/QCR7, UQCRQ/QCR8, UQCR10/QCR9, UQCR11/QCR10 and a cleavage product of UQCRFS1). This cytochrome bc1 complex then forms a dimer.</text>
</comment>
<comment type="subcellular location">
    <subcellularLocation>
        <location evidence="2">Mitochondrion inner membrane</location>
        <topology evidence="2">Multi-pass membrane protein</topology>
    </subcellularLocation>
</comment>
<comment type="miscellaneous">
    <text evidence="1">Heme 1 (or BL or b562) is low-potential and absorbs at about 562 nm, and heme 2 (or BH or b566) is high-potential and absorbs at about 566 nm.</text>
</comment>
<comment type="similarity">
    <text evidence="3 4">Belongs to the cytochrome b family.</text>
</comment>
<comment type="caution">
    <text evidence="2">The full-length protein contains only eight transmembrane helices, not nine as predicted by bioinformatics tools.</text>
</comment>
<name>CYB_ALEOE</name>
<protein>
    <recommendedName>
        <fullName>Cytochrome b</fullName>
    </recommendedName>
    <alternativeName>
        <fullName>Complex III subunit 3</fullName>
    </alternativeName>
    <alternativeName>
        <fullName>Complex III subunit III</fullName>
    </alternativeName>
    <alternativeName>
        <fullName>Cytochrome b-c1 complex subunit 3</fullName>
    </alternativeName>
    <alternativeName>
        <fullName>Ubiquinol-cytochrome-c reductase complex cytochrome b subunit</fullName>
    </alternativeName>
</protein>
<proteinExistence type="inferred from homology"/>
<feature type="chain" id="PRO_0000061188" description="Cytochrome b">
    <location>
        <begin position="1"/>
        <end position="380"/>
    </location>
</feature>
<feature type="transmembrane region" description="Helical" evidence="2">
    <location>
        <begin position="33"/>
        <end position="53"/>
    </location>
</feature>
<feature type="transmembrane region" description="Helical" evidence="2">
    <location>
        <begin position="77"/>
        <end position="98"/>
    </location>
</feature>
<feature type="transmembrane region" description="Helical" evidence="2">
    <location>
        <begin position="113"/>
        <end position="133"/>
    </location>
</feature>
<feature type="transmembrane region" description="Helical" evidence="2">
    <location>
        <begin position="178"/>
        <end position="198"/>
    </location>
</feature>
<feature type="transmembrane region" description="Helical" evidence="2">
    <location>
        <begin position="226"/>
        <end position="246"/>
    </location>
</feature>
<feature type="transmembrane region" description="Helical" evidence="2">
    <location>
        <begin position="288"/>
        <end position="308"/>
    </location>
</feature>
<feature type="transmembrane region" description="Helical" evidence="2">
    <location>
        <begin position="320"/>
        <end position="340"/>
    </location>
</feature>
<feature type="transmembrane region" description="Helical" evidence="2">
    <location>
        <begin position="347"/>
        <end position="367"/>
    </location>
</feature>
<feature type="binding site" description="axial binding residue" evidence="2">
    <location>
        <position position="83"/>
    </location>
    <ligand>
        <name>heme b</name>
        <dbReference type="ChEBI" id="CHEBI:60344"/>
        <label>b562</label>
    </ligand>
    <ligandPart>
        <name>Fe</name>
        <dbReference type="ChEBI" id="CHEBI:18248"/>
    </ligandPart>
</feature>
<feature type="binding site" description="axial binding residue" evidence="2">
    <location>
        <position position="97"/>
    </location>
    <ligand>
        <name>heme b</name>
        <dbReference type="ChEBI" id="CHEBI:60344"/>
        <label>b566</label>
    </ligand>
    <ligandPart>
        <name>Fe</name>
        <dbReference type="ChEBI" id="CHEBI:18248"/>
    </ligandPart>
</feature>
<feature type="binding site" description="axial binding residue" evidence="2">
    <location>
        <position position="182"/>
    </location>
    <ligand>
        <name>heme b</name>
        <dbReference type="ChEBI" id="CHEBI:60344"/>
        <label>b562</label>
    </ligand>
    <ligandPart>
        <name>Fe</name>
        <dbReference type="ChEBI" id="CHEBI:18248"/>
    </ligandPart>
</feature>
<feature type="binding site" description="axial binding residue" evidence="2">
    <location>
        <position position="196"/>
    </location>
    <ligand>
        <name>heme b</name>
        <dbReference type="ChEBI" id="CHEBI:60344"/>
        <label>b566</label>
    </ligand>
    <ligandPart>
        <name>Fe</name>
        <dbReference type="ChEBI" id="CHEBI:18248"/>
    </ligandPart>
</feature>
<feature type="binding site" evidence="2">
    <location>
        <position position="201"/>
    </location>
    <ligand>
        <name>a ubiquinone</name>
        <dbReference type="ChEBI" id="CHEBI:16389"/>
    </ligand>
</feature>
<evidence type="ECO:0000250" key="1"/>
<evidence type="ECO:0000250" key="2">
    <source>
        <dbReference type="UniProtKB" id="P00157"/>
    </source>
</evidence>
<evidence type="ECO:0000255" key="3">
    <source>
        <dbReference type="PROSITE-ProRule" id="PRU00967"/>
    </source>
</evidence>
<evidence type="ECO:0000255" key="4">
    <source>
        <dbReference type="PROSITE-ProRule" id="PRU00968"/>
    </source>
</evidence>